<accession>Q98185</accession>
<accession>O12600</accession>
<accession>O12881</accession>
<name>MC014_MCV1</name>
<proteinExistence type="predicted"/>
<organismHost>
    <name type="scientific">Homo sapiens</name>
    <name type="common">Human</name>
    <dbReference type="NCBI Taxonomy" id="9606"/>
</organismHost>
<gene>
    <name type="primary">MC014</name>
</gene>
<reference key="1">
    <citation type="journal article" date="1996" name="Science">
        <title>Genome sequence of a human tumorigenic poxvirus: prediction of specific host response-evasion genes.</title>
        <authorList>
            <person name="Senkevich T.G."/>
            <person name="Bugert J.J."/>
            <person name="Sisler J.R."/>
            <person name="Koonin E.V."/>
            <person name="Darai G."/>
            <person name="Moss B."/>
        </authorList>
    </citation>
    <scope>NUCLEOTIDE SEQUENCE [LARGE SCALE GENOMIC DNA]</scope>
</reference>
<reference key="2">
    <citation type="journal article" date="1996" name="Virus Genes">
        <title>Sequence analysis of a Molluscum contagiosum virus DNA region which includes the gene encoding protein kinase 2 and other genes with unique organization.</title>
        <authorList>
            <person name="Martin-Gallardo A."/>
            <person name="Moratilla M."/>
            <person name="Funes J.M."/>
            <person name="Agromayor M."/>
            <person name="Nunez A."/>
            <person name="Varas A.J."/>
            <person name="Collado M."/>
            <person name="Valencia A."/>
            <person name="Lopez-Estebaranz J.L."/>
            <person name="Esteban M."/>
        </authorList>
    </citation>
    <scope>NUCLEOTIDE SEQUENCE [LARGE SCALE GENOMIC DNA]</scope>
</reference>
<reference key="3">
    <citation type="journal article" date="1997" name="Virus Genes">
        <title>A random DNA sequencing, computer-based approach for the generation of a gene map of Molluscum contagiosum virus.</title>
        <authorList>
            <person name="Moratilla M."/>
            <person name="Agromayor M."/>
            <person name="Nunez A."/>
            <person name="Funes J.M."/>
            <person name="Varas A.J."/>
            <person name="Lopez-Estebaranz J.L."/>
            <person name="Esteban M."/>
            <person name="Martin-Gallardo A."/>
        </authorList>
    </citation>
    <scope>NUCLEOTIDE SEQUENCE [LARGE SCALE GENOMIC DNA]</scope>
</reference>
<reference key="4">
    <citation type="journal article" date="2017" name="J. Gen. Virol.">
        <title>Recombination events and variability among full-length genomes of co-circulating molluscum contagiosum virus subtypes 1 and 2.</title>
        <authorList>
            <person name="Lopez-Bueno A."/>
            <person name="Parras-Molto M."/>
            <person name="Lopez-Barrantes O."/>
            <person name="Belda S."/>
            <person name="Alejo A."/>
        </authorList>
    </citation>
    <scope>NUCLEOTIDE SEQUENCE [LARGE SCALE GENOMIC DNA]</scope>
</reference>
<reference key="5">
    <citation type="journal article" date="2015" name="J. Virol.">
        <title>Poxvirus protein MC132 from molluscum contagiosum virus inhibits NF-B activation by targeting p65 for degradation.</title>
        <authorList>
            <person name="Brady G."/>
            <person name="Haas D.A."/>
            <person name="Farrell P.J."/>
            <person name="Pichlmair A."/>
            <person name="Bowie A.G."/>
        </authorList>
    </citation>
    <scope>SUBCELLULAR LOCATION</scope>
</reference>
<comment type="subcellular location">
    <subcellularLocation>
        <location evidence="1">Host nucleus</location>
    </subcellularLocation>
</comment>
<organism>
    <name type="scientific">Molluscum contagiosum virus subtype 1</name>
    <name type="common">MOCV</name>
    <name type="synonym">MCVI</name>
    <dbReference type="NCBI Taxonomy" id="10280"/>
    <lineage>
        <taxon>Viruses</taxon>
        <taxon>Varidnaviria</taxon>
        <taxon>Bamfordvirae</taxon>
        <taxon>Nucleocytoviricota</taxon>
        <taxon>Pokkesviricetes</taxon>
        <taxon>Chitovirales</taxon>
        <taxon>Poxviridae</taxon>
        <taxon>Chordopoxvirinae</taxon>
        <taxon>Molluscipoxvirus</taxon>
        <taxon>Molluscum contagiosum virus</taxon>
    </lineage>
</organism>
<sequence>MGVSLATRKYWPARTREGGCLRWEPVPAGQDLSCSLCDSLRVDMFLVVEPRRGLTRAGRGCECVRAGKRSLRGLARWPGAGAGGSAAFRACKTRHLLQREKCAVGRERRFCLWSGRHPKAPPGGRSRVRAHPGSDRVTAWLTGRRNS</sequence>
<feature type="chain" id="PRO_0000444799" description="Protein MC014">
    <location>
        <begin position="1"/>
        <end position="147"/>
    </location>
</feature>
<dbReference type="EMBL" id="U86894">
    <property type="protein sequence ID" value="AAB57934.1"/>
    <property type="molecule type" value="Genomic_DNA"/>
</dbReference>
<dbReference type="EMBL" id="U60315">
    <property type="protein sequence ID" value="AAC55142.1"/>
    <property type="molecule type" value="Genomic_DNA"/>
</dbReference>
<dbReference type="EMBL" id="KY040275">
    <property type="protein sequence ID" value="AQY16755.1"/>
    <property type="molecule type" value="Genomic_DNA"/>
</dbReference>
<dbReference type="EMBL" id="KY040276">
    <property type="protein sequence ID" value="AQY16936.1"/>
    <property type="molecule type" value="Genomic_DNA"/>
</dbReference>
<dbReference type="PIR" id="T30616">
    <property type="entry name" value="T30616"/>
</dbReference>
<dbReference type="KEGG" id="vg:1487035"/>
<dbReference type="Proteomes" id="UP000000869">
    <property type="component" value="Genome"/>
</dbReference>
<dbReference type="GO" id="GO:0042025">
    <property type="term" value="C:host cell nucleus"/>
    <property type="evidence" value="ECO:0000314"/>
    <property type="project" value="UniProtKB"/>
</dbReference>
<protein>
    <recommendedName>
        <fullName>Protein MC014</fullName>
    </recommendedName>
</protein>
<keyword id="KW-1048">Host nucleus</keyword>
<keyword id="KW-1185">Reference proteome</keyword>
<evidence type="ECO:0000269" key="1">
    <source>
    </source>
</evidence>